<sequence>MAVQQNKPTRSKRGMRRSHDALTAVTSLSVDKTSGEKHLRHHITADGYYRGRKVIAK</sequence>
<feature type="chain" id="PRO_1000079328" description="Large ribosomal subunit protein bL32">
    <location>
        <begin position="1"/>
        <end position="57"/>
    </location>
</feature>
<feature type="region of interest" description="Disordered" evidence="2">
    <location>
        <begin position="1"/>
        <end position="38"/>
    </location>
</feature>
<gene>
    <name evidence="1" type="primary">rpmF</name>
    <name type="ordered locus">EcolC_2512</name>
</gene>
<dbReference type="EMBL" id="CP000946">
    <property type="protein sequence ID" value="ACA78143.1"/>
    <property type="molecule type" value="Genomic_DNA"/>
</dbReference>
<dbReference type="RefSeq" id="WP_000290727.1">
    <property type="nucleotide sequence ID" value="NZ_MTFT01000032.1"/>
</dbReference>
<dbReference type="SMR" id="B1IV14"/>
<dbReference type="GeneID" id="93776319"/>
<dbReference type="KEGG" id="ecl:EcolC_2512"/>
<dbReference type="HOGENOM" id="CLU_129084_2_1_6"/>
<dbReference type="GO" id="GO:0015934">
    <property type="term" value="C:large ribosomal subunit"/>
    <property type="evidence" value="ECO:0007669"/>
    <property type="project" value="InterPro"/>
</dbReference>
<dbReference type="GO" id="GO:0003735">
    <property type="term" value="F:structural constituent of ribosome"/>
    <property type="evidence" value="ECO:0007669"/>
    <property type="project" value="InterPro"/>
</dbReference>
<dbReference type="GO" id="GO:0006412">
    <property type="term" value="P:translation"/>
    <property type="evidence" value="ECO:0007669"/>
    <property type="project" value="UniProtKB-UniRule"/>
</dbReference>
<dbReference type="HAMAP" id="MF_00340">
    <property type="entry name" value="Ribosomal_bL32"/>
    <property type="match status" value="1"/>
</dbReference>
<dbReference type="InterPro" id="IPR002677">
    <property type="entry name" value="Ribosomal_bL32"/>
</dbReference>
<dbReference type="InterPro" id="IPR044957">
    <property type="entry name" value="Ribosomal_bL32_bact"/>
</dbReference>
<dbReference type="InterPro" id="IPR011332">
    <property type="entry name" value="Ribosomal_zn-bd"/>
</dbReference>
<dbReference type="NCBIfam" id="TIGR01031">
    <property type="entry name" value="rpmF_bact"/>
    <property type="match status" value="1"/>
</dbReference>
<dbReference type="PANTHER" id="PTHR35534">
    <property type="entry name" value="50S RIBOSOMAL PROTEIN L32"/>
    <property type="match status" value="1"/>
</dbReference>
<dbReference type="PANTHER" id="PTHR35534:SF1">
    <property type="entry name" value="LARGE RIBOSOMAL SUBUNIT PROTEIN BL32"/>
    <property type="match status" value="1"/>
</dbReference>
<dbReference type="Pfam" id="PF01783">
    <property type="entry name" value="Ribosomal_L32p"/>
    <property type="match status" value="1"/>
</dbReference>
<dbReference type="SUPFAM" id="SSF57829">
    <property type="entry name" value="Zn-binding ribosomal proteins"/>
    <property type="match status" value="1"/>
</dbReference>
<keyword id="KW-0687">Ribonucleoprotein</keyword>
<keyword id="KW-0689">Ribosomal protein</keyword>
<reference key="1">
    <citation type="submission" date="2008-02" db="EMBL/GenBank/DDBJ databases">
        <title>Complete sequence of Escherichia coli C str. ATCC 8739.</title>
        <authorList>
            <person name="Copeland A."/>
            <person name="Lucas S."/>
            <person name="Lapidus A."/>
            <person name="Glavina del Rio T."/>
            <person name="Dalin E."/>
            <person name="Tice H."/>
            <person name="Bruce D."/>
            <person name="Goodwin L."/>
            <person name="Pitluck S."/>
            <person name="Kiss H."/>
            <person name="Brettin T."/>
            <person name="Detter J.C."/>
            <person name="Han C."/>
            <person name="Kuske C.R."/>
            <person name="Schmutz J."/>
            <person name="Larimer F."/>
            <person name="Land M."/>
            <person name="Hauser L."/>
            <person name="Kyrpides N."/>
            <person name="Mikhailova N."/>
            <person name="Ingram L."/>
            <person name="Richardson P."/>
        </authorList>
    </citation>
    <scope>NUCLEOTIDE SEQUENCE [LARGE SCALE GENOMIC DNA]</scope>
    <source>
        <strain>ATCC 8739 / DSM 1576 / NBRC 3972 / NCIMB 8545 / WDCM 00012 / Crooks</strain>
    </source>
</reference>
<comment type="similarity">
    <text evidence="1">Belongs to the bacterial ribosomal protein bL32 family.</text>
</comment>
<accession>B1IV14</accession>
<evidence type="ECO:0000255" key="1">
    <source>
        <dbReference type="HAMAP-Rule" id="MF_00340"/>
    </source>
</evidence>
<evidence type="ECO:0000256" key="2">
    <source>
        <dbReference type="SAM" id="MobiDB-lite"/>
    </source>
</evidence>
<evidence type="ECO:0000305" key="3"/>
<protein>
    <recommendedName>
        <fullName evidence="1">Large ribosomal subunit protein bL32</fullName>
    </recommendedName>
    <alternativeName>
        <fullName evidence="3">50S ribosomal protein L32</fullName>
    </alternativeName>
</protein>
<name>RL32_ECOLC</name>
<organism>
    <name type="scientific">Escherichia coli (strain ATCC 8739 / DSM 1576 / NBRC 3972 / NCIMB 8545 / WDCM 00012 / Crooks)</name>
    <dbReference type="NCBI Taxonomy" id="481805"/>
    <lineage>
        <taxon>Bacteria</taxon>
        <taxon>Pseudomonadati</taxon>
        <taxon>Pseudomonadota</taxon>
        <taxon>Gammaproteobacteria</taxon>
        <taxon>Enterobacterales</taxon>
        <taxon>Enterobacteriaceae</taxon>
        <taxon>Escherichia</taxon>
    </lineage>
</organism>
<proteinExistence type="inferred from homology"/>